<sequence length="253" mass="28725">MSLVCSVIFIHHAFNANILDKDYAFSDGEILMVDNAVRTHFEPYERHFKEIGFTENTIKKYLQCTNIQTVTVPVPAKFLRASNVPTGLLNEMIAYLNSEERNHHNFSELLLFSCLSIFAACKGFITLLTNGVLSVSGKVRNIVNMKPAHPWKLKDICDCLYISESLLKKKLKQEQTTFSQILLDARMQHAKNLIRVEGSVNKIAEQCGYASTSYFIYAFRKHFGNSPKRVSKEYRCQSHTGMNTGNTMNALAI</sequence>
<name>YDEO_ECOLI</name>
<organism>
    <name type="scientific">Escherichia coli (strain K12)</name>
    <dbReference type="NCBI Taxonomy" id="83333"/>
    <lineage>
        <taxon>Bacteria</taxon>
        <taxon>Pseudomonadati</taxon>
        <taxon>Pseudomonadota</taxon>
        <taxon>Gammaproteobacteria</taxon>
        <taxon>Enterobacterales</taxon>
        <taxon>Enterobacteriaceae</taxon>
        <taxon>Escherichia</taxon>
    </lineage>
</organism>
<reference key="1">
    <citation type="journal article" date="1996" name="DNA Res.">
        <title>A 570-kb DNA sequence of the Escherichia coli K-12 genome corresponding to the 28.0-40.1 min region on the linkage map.</title>
        <authorList>
            <person name="Aiba H."/>
            <person name="Baba T."/>
            <person name="Fujita K."/>
            <person name="Hayashi K."/>
            <person name="Inada T."/>
            <person name="Isono K."/>
            <person name="Itoh T."/>
            <person name="Kasai H."/>
            <person name="Kashimoto K."/>
            <person name="Kimura S."/>
            <person name="Kitakawa M."/>
            <person name="Kitagawa M."/>
            <person name="Makino K."/>
            <person name="Miki T."/>
            <person name="Mizobuchi K."/>
            <person name="Mori H."/>
            <person name="Mori T."/>
            <person name="Motomura K."/>
            <person name="Nakade S."/>
            <person name="Nakamura Y."/>
            <person name="Nashimoto H."/>
            <person name="Nishio Y."/>
            <person name="Oshima T."/>
            <person name="Saito N."/>
            <person name="Sampei G."/>
            <person name="Seki Y."/>
            <person name="Sivasundaram S."/>
            <person name="Tagami H."/>
            <person name="Takeda J."/>
            <person name="Takemoto K."/>
            <person name="Takeuchi Y."/>
            <person name="Wada C."/>
            <person name="Yamamoto Y."/>
            <person name="Horiuchi T."/>
        </authorList>
    </citation>
    <scope>NUCLEOTIDE SEQUENCE [LARGE SCALE GENOMIC DNA]</scope>
    <source>
        <strain>K12 / W3110 / ATCC 27325 / DSM 5911</strain>
    </source>
</reference>
<reference key="2">
    <citation type="journal article" date="1997" name="Science">
        <title>The complete genome sequence of Escherichia coli K-12.</title>
        <authorList>
            <person name="Blattner F.R."/>
            <person name="Plunkett G. III"/>
            <person name="Bloch C.A."/>
            <person name="Perna N.T."/>
            <person name="Burland V."/>
            <person name="Riley M."/>
            <person name="Collado-Vides J."/>
            <person name="Glasner J.D."/>
            <person name="Rode C.K."/>
            <person name="Mayhew G.F."/>
            <person name="Gregor J."/>
            <person name="Davis N.W."/>
            <person name="Kirkpatrick H.A."/>
            <person name="Goeden M.A."/>
            <person name="Rose D.J."/>
            <person name="Mau B."/>
            <person name="Shao Y."/>
        </authorList>
    </citation>
    <scope>NUCLEOTIDE SEQUENCE [LARGE SCALE GENOMIC DNA]</scope>
    <source>
        <strain>K12 / MG1655 / ATCC 47076</strain>
    </source>
</reference>
<reference key="3">
    <citation type="journal article" date="2006" name="Mol. Syst. Biol.">
        <title>Highly accurate genome sequences of Escherichia coli K-12 strains MG1655 and W3110.</title>
        <authorList>
            <person name="Hayashi K."/>
            <person name="Morooka N."/>
            <person name="Yamamoto Y."/>
            <person name="Fujita K."/>
            <person name="Isono K."/>
            <person name="Choi S."/>
            <person name="Ohtsubo E."/>
            <person name="Baba T."/>
            <person name="Wanner B.L."/>
            <person name="Mori H."/>
            <person name="Horiuchi T."/>
        </authorList>
    </citation>
    <scope>NUCLEOTIDE SEQUENCE [LARGE SCALE GENOMIC DNA]</scope>
    <source>
        <strain>K12 / W3110 / ATCC 27325 / DSM 5911</strain>
    </source>
</reference>
<reference key="4">
    <citation type="journal article" date="2002" name="J. Bacteriol.">
        <title>Escherichia coli gene expression responsive to levels of the response regulator EvgA.</title>
        <authorList>
            <person name="Masuda N."/>
            <person name="Church G.M."/>
        </authorList>
    </citation>
    <scope>INDUCTION</scope>
    <source>
        <strain>K12 / MG1655 / ATCC 47076</strain>
    </source>
</reference>
<reference key="5">
    <citation type="journal article" date="2003" name="Mol. Microbiol.">
        <title>Regulatory network of acid resistance genes in Escherichia coli.</title>
        <authorList>
            <person name="Masuda N."/>
            <person name="Church G.M."/>
        </authorList>
    </citation>
    <scope>FUNCTION</scope>
    <source>
        <strain>K12 / MG1655 / ATCC 47076</strain>
    </source>
</reference>
<dbReference type="EMBL" id="U00096">
    <property type="protein sequence ID" value="AAC74572.1"/>
    <property type="molecule type" value="Genomic_DNA"/>
</dbReference>
<dbReference type="EMBL" id="AP009048">
    <property type="protein sequence ID" value="BAA15173.2"/>
    <property type="molecule type" value="Genomic_DNA"/>
</dbReference>
<dbReference type="PIR" id="F64903">
    <property type="entry name" value="F64903"/>
</dbReference>
<dbReference type="RefSeq" id="NP_416016.1">
    <property type="nucleotide sequence ID" value="NC_000913.3"/>
</dbReference>
<dbReference type="RefSeq" id="WP_000060495.1">
    <property type="nucleotide sequence ID" value="NZ_LN832404.1"/>
</dbReference>
<dbReference type="SMR" id="P76135"/>
<dbReference type="BioGRID" id="4260212">
    <property type="interactions" value="84"/>
</dbReference>
<dbReference type="BioGRID" id="850287">
    <property type="interactions" value="1"/>
</dbReference>
<dbReference type="FunCoup" id="P76135">
    <property type="interactions" value="31"/>
</dbReference>
<dbReference type="IntAct" id="P76135">
    <property type="interactions" value="1"/>
</dbReference>
<dbReference type="STRING" id="511145.b1499"/>
<dbReference type="PaxDb" id="511145-b1499"/>
<dbReference type="EnsemblBacteria" id="AAC74572">
    <property type="protein sequence ID" value="AAC74572"/>
    <property type="gene ID" value="b1499"/>
</dbReference>
<dbReference type="GeneID" id="945922"/>
<dbReference type="KEGG" id="ecj:JW1494"/>
<dbReference type="KEGG" id="eco:b1499"/>
<dbReference type="KEGG" id="ecoc:C3026_08680"/>
<dbReference type="PATRIC" id="fig|1411691.4.peg.767"/>
<dbReference type="EchoBASE" id="EB3558"/>
<dbReference type="eggNOG" id="COG2207">
    <property type="taxonomic scope" value="Bacteria"/>
</dbReference>
<dbReference type="HOGENOM" id="CLU_000445_81_4_6"/>
<dbReference type="InParanoid" id="P76135"/>
<dbReference type="OMA" id="HMGMNTG"/>
<dbReference type="OrthoDB" id="5949386at2"/>
<dbReference type="PhylomeDB" id="P76135"/>
<dbReference type="BioCyc" id="EcoCyc:G6789-MONOMER"/>
<dbReference type="PRO" id="PR:P76135"/>
<dbReference type="Proteomes" id="UP000000625">
    <property type="component" value="Chromosome"/>
</dbReference>
<dbReference type="GO" id="GO:0003700">
    <property type="term" value="F:DNA-binding transcription factor activity"/>
    <property type="evidence" value="ECO:0000314"/>
    <property type="project" value="EcoCyc"/>
</dbReference>
<dbReference type="GO" id="GO:0043565">
    <property type="term" value="F:sequence-specific DNA binding"/>
    <property type="evidence" value="ECO:0007669"/>
    <property type="project" value="InterPro"/>
</dbReference>
<dbReference type="GO" id="GO:0006351">
    <property type="term" value="P:DNA-templated transcription"/>
    <property type="evidence" value="ECO:0000314"/>
    <property type="project" value="EcoCyc"/>
</dbReference>
<dbReference type="GO" id="GO:0045893">
    <property type="term" value="P:positive regulation of DNA-templated transcription"/>
    <property type="evidence" value="ECO:0000314"/>
    <property type="project" value="EcoCyc"/>
</dbReference>
<dbReference type="FunFam" id="1.10.10.60:FF:000346">
    <property type="entry name" value="HTH-type transcriptional regulator ydeO"/>
    <property type="match status" value="1"/>
</dbReference>
<dbReference type="Gene3D" id="1.10.10.60">
    <property type="entry name" value="Homeodomain-like"/>
    <property type="match status" value="1"/>
</dbReference>
<dbReference type="InterPro" id="IPR009057">
    <property type="entry name" value="Homeodomain-like_sf"/>
</dbReference>
<dbReference type="InterPro" id="IPR018060">
    <property type="entry name" value="HTH_AraC"/>
</dbReference>
<dbReference type="InterPro" id="IPR018062">
    <property type="entry name" value="HTH_AraC-typ_CS"/>
</dbReference>
<dbReference type="InterPro" id="IPR020449">
    <property type="entry name" value="Tscrpt_reg_AraC-type_HTH"/>
</dbReference>
<dbReference type="NCBIfam" id="NF007407">
    <property type="entry name" value="PRK09940.1"/>
    <property type="match status" value="1"/>
</dbReference>
<dbReference type="PANTHER" id="PTHR43280">
    <property type="entry name" value="ARAC-FAMILY TRANSCRIPTIONAL REGULATOR"/>
    <property type="match status" value="1"/>
</dbReference>
<dbReference type="PANTHER" id="PTHR43280:SF33">
    <property type="entry name" value="HTH-TYPE TRANSCRIPTIONAL REGULATOR APPY-RELATED"/>
    <property type="match status" value="1"/>
</dbReference>
<dbReference type="Pfam" id="PF12833">
    <property type="entry name" value="HTH_18"/>
    <property type="match status" value="1"/>
</dbReference>
<dbReference type="PRINTS" id="PR00032">
    <property type="entry name" value="HTHARAC"/>
</dbReference>
<dbReference type="SMART" id="SM00342">
    <property type="entry name" value="HTH_ARAC"/>
    <property type="match status" value="1"/>
</dbReference>
<dbReference type="SUPFAM" id="SSF46689">
    <property type="entry name" value="Homeodomain-like"/>
    <property type="match status" value="1"/>
</dbReference>
<dbReference type="PROSITE" id="PS00041">
    <property type="entry name" value="HTH_ARAC_FAMILY_1"/>
    <property type="match status" value="1"/>
</dbReference>
<dbReference type="PROSITE" id="PS01124">
    <property type="entry name" value="HTH_ARAC_FAMILY_2"/>
    <property type="match status" value="1"/>
</dbReference>
<protein>
    <recommendedName>
        <fullName>HTH-type transcriptional regulator YdeO</fullName>
    </recommendedName>
</protein>
<proteinExistence type="evidence at transcript level"/>
<feature type="chain" id="PRO_0000194606" description="HTH-type transcriptional regulator YdeO">
    <location>
        <begin position="1"/>
        <end position="253"/>
    </location>
</feature>
<feature type="domain" description="HTH araC/xylS-type" evidence="1">
    <location>
        <begin position="137"/>
        <end position="233"/>
    </location>
</feature>
<feature type="DNA-binding region" description="H-T-H motif" evidence="1">
    <location>
        <begin position="154"/>
        <end position="175"/>
    </location>
</feature>
<feature type="DNA-binding region" description="H-T-H motif" evidence="1">
    <location>
        <begin position="200"/>
        <end position="223"/>
    </location>
</feature>
<accession>P76135</accession>
<accession>P76877</accession>
<gene>
    <name type="primary">ydeO</name>
    <name type="ordered locus">b1499</name>
    <name type="ordered locus">JW1494</name>
</gene>
<comment type="function">
    <text evidence="3">Induces the expression of gadE and mdtEF. Could also regulate the expression of other genes involved in acid resistance.</text>
</comment>
<comment type="induction">
    <text evidence="2">Induced by EvgA.</text>
</comment>
<keyword id="KW-0010">Activator</keyword>
<keyword id="KW-0238">DNA-binding</keyword>
<keyword id="KW-1185">Reference proteome</keyword>
<keyword id="KW-0804">Transcription</keyword>
<keyword id="KW-0805">Transcription regulation</keyword>
<evidence type="ECO:0000255" key="1">
    <source>
        <dbReference type="PROSITE-ProRule" id="PRU00593"/>
    </source>
</evidence>
<evidence type="ECO:0000269" key="2">
    <source>
    </source>
</evidence>
<evidence type="ECO:0000269" key="3">
    <source>
    </source>
</evidence>